<reference key="1">
    <citation type="journal article" date="2008" name="DNA Res.">
        <title>Determination of the genome sequence of Porphyromonas gingivalis strain ATCC 33277 and genomic comparison with strain W83 revealed extensive genome rearrangements in P. gingivalis.</title>
        <authorList>
            <person name="Naito M."/>
            <person name="Hirakawa H."/>
            <person name="Yamashita A."/>
            <person name="Ohara N."/>
            <person name="Shoji M."/>
            <person name="Yukitake H."/>
            <person name="Nakayama K."/>
            <person name="Toh H."/>
            <person name="Yoshimura F."/>
            <person name="Kuhara S."/>
            <person name="Hattori M."/>
            <person name="Hayashi T."/>
            <person name="Nakayama K."/>
        </authorList>
    </citation>
    <scope>NUCLEOTIDE SEQUENCE [LARGE SCALE GENOMIC DNA]</scope>
    <source>
        <strain>ATCC 33277 / DSM 20709 / CIP 103683 / JCM 12257 / NCTC 11834 / 2561</strain>
    </source>
</reference>
<dbReference type="EC" id="3.2.2.27" evidence="1"/>
<dbReference type="EMBL" id="AP009380">
    <property type="protein sequence ID" value="BAG32861.1"/>
    <property type="molecule type" value="Genomic_DNA"/>
</dbReference>
<dbReference type="RefSeq" id="WP_012457441.1">
    <property type="nucleotide sequence ID" value="NC_010729.1"/>
</dbReference>
<dbReference type="SMR" id="B2RHL6"/>
<dbReference type="GeneID" id="29255585"/>
<dbReference type="KEGG" id="pgn:PGN_0342"/>
<dbReference type="eggNOG" id="COG0692">
    <property type="taxonomic scope" value="Bacteria"/>
</dbReference>
<dbReference type="HOGENOM" id="CLU_032162_3_0_10"/>
<dbReference type="OrthoDB" id="9804372at2"/>
<dbReference type="BioCyc" id="PGIN431947:G1G2V-376-MONOMER"/>
<dbReference type="Proteomes" id="UP000008842">
    <property type="component" value="Chromosome"/>
</dbReference>
<dbReference type="GO" id="GO:0005737">
    <property type="term" value="C:cytoplasm"/>
    <property type="evidence" value="ECO:0007669"/>
    <property type="project" value="UniProtKB-SubCell"/>
</dbReference>
<dbReference type="GO" id="GO:0004844">
    <property type="term" value="F:uracil DNA N-glycosylase activity"/>
    <property type="evidence" value="ECO:0007669"/>
    <property type="project" value="UniProtKB-UniRule"/>
</dbReference>
<dbReference type="GO" id="GO:0097510">
    <property type="term" value="P:base-excision repair, AP site formation via deaminated base removal"/>
    <property type="evidence" value="ECO:0007669"/>
    <property type="project" value="TreeGrafter"/>
</dbReference>
<dbReference type="CDD" id="cd10027">
    <property type="entry name" value="UDG-F1-like"/>
    <property type="match status" value="1"/>
</dbReference>
<dbReference type="FunFam" id="3.40.470.10:FF:000001">
    <property type="entry name" value="Uracil-DNA glycosylase"/>
    <property type="match status" value="1"/>
</dbReference>
<dbReference type="Gene3D" id="3.40.470.10">
    <property type="entry name" value="Uracil-DNA glycosylase-like domain"/>
    <property type="match status" value="1"/>
</dbReference>
<dbReference type="HAMAP" id="MF_00148">
    <property type="entry name" value="UDG"/>
    <property type="match status" value="1"/>
</dbReference>
<dbReference type="InterPro" id="IPR002043">
    <property type="entry name" value="UDG_fam1"/>
</dbReference>
<dbReference type="InterPro" id="IPR018085">
    <property type="entry name" value="Ura-DNA_Glyclase_AS"/>
</dbReference>
<dbReference type="InterPro" id="IPR005122">
    <property type="entry name" value="Uracil-DNA_glycosylase-like"/>
</dbReference>
<dbReference type="InterPro" id="IPR036895">
    <property type="entry name" value="Uracil-DNA_glycosylase-like_sf"/>
</dbReference>
<dbReference type="NCBIfam" id="NF003588">
    <property type="entry name" value="PRK05254.1-1"/>
    <property type="match status" value="1"/>
</dbReference>
<dbReference type="NCBIfam" id="NF003589">
    <property type="entry name" value="PRK05254.1-2"/>
    <property type="match status" value="1"/>
</dbReference>
<dbReference type="NCBIfam" id="NF003591">
    <property type="entry name" value="PRK05254.1-4"/>
    <property type="match status" value="1"/>
</dbReference>
<dbReference type="NCBIfam" id="NF003592">
    <property type="entry name" value="PRK05254.1-5"/>
    <property type="match status" value="1"/>
</dbReference>
<dbReference type="NCBIfam" id="TIGR00628">
    <property type="entry name" value="ung"/>
    <property type="match status" value="1"/>
</dbReference>
<dbReference type="PANTHER" id="PTHR11264">
    <property type="entry name" value="URACIL-DNA GLYCOSYLASE"/>
    <property type="match status" value="1"/>
</dbReference>
<dbReference type="PANTHER" id="PTHR11264:SF0">
    <property type="entry name" value="URACIL-DNA GLYCOSYLASE"/>
    <property type="match status" value="1"/>
</dbReference>
<dbReference type="Pfam" id="PF03167">
    <property type="entry name" value="UDG"/>
    <property type="match status" value="1"/>
</dbReference>
<dbReference type="SMART" id="SM00986">
    <property type="entry name" value="UDG"/>
    <property type="match status" value="1"/>
</dbReference>
<dbReference type="SMART" id="SM00987">
    <property type="entry name" value="UreE_C"/>
    <property type="match status" value="1"/>
</dbReference>
<dbReference type="SUPFAM" id="SSF52141">
    <property type="entry name" value="Uracil-DNA glycosylase-like"/>
    <property type="match status" value="1"/>
</dbReference>
<dbReference type="PROSITE" id="PS00130">
    <property type="entry name" value="U_DNA_GLYCOSYLASE"/>
    <property type="match status" value="1"/>
</dbReference>
<proteinExistence type="inferred from homology"/>
<evidence type="ECO:0000255" key="1">
    <source>
        <dbReference type="HAMAP-Rule" id="MF_00148"/>
    </source>
</evidence>
<name>UNG_PORG3</name>
<keyword id="KW-0963">Cytoplasm</keyword>
<keyword id="KW-0227">DNA damage</keyword>
<keyword id="KW-0234">DNA repair</keyword>
<keyword id="KW-0378">Hydrolase</keyword>
<sequence>MKEVQIEAGWKKVLQEEFDKFYFEKLTDFVREEYRQSPIYPPARFIFRAFDTCPFDRVKVVILGQDPYHEPGQAEGLAFSVPTGIPIPPSLRNICEEIRTDTGQPAHIDGGSLLPWVEQGVLLLNATLTVRASQAGSHQGHGWETFTDAAIEALAKRREHLVFLLWGSYARRKSAMIDPRRHLILEAPHPSPLSAHRGFFGCKHFSRTNAYLRQHGIAPIVW</sequence>
<accession>B2RHL6</accession>
<feature type="chain" id="PRO_1000096597" description="Uracil-DNA glycosylase">
    <location>
        <begin position="1"/>
        <end position="222"/>
    </location>
</feature>
<feature type="active site" description="Proton acceptor" evidence="1">
    <location>
        <position position="66"/>
    </location>
</feature>
<comment type="function">
    <text evidence="1">Excises uracil residues from the DNA which can arise as a result of misincorporation of dUMP residues by DNA polymerase or due to deamination of cytosine.</text>
</comment>
<comment type="catalytic activity">
    <reaction evidence="1">
        <text>Hydrolyzes single-stranded DNA or mismatched double-stranded DNA and polynucleotides, releasing free uracil.</text>
        <dbReference type="EC" id="3.2.2.27"/>
    </reaction>
</comment>
<comment type="subcellular location">
    <subcellularLocation>
        <location evidence="1">Cytoplasm</location>
    </subcellularLocation>
</comment>
<comment type="similarity">
    <text evidence="1">Belongs to the uracil-DNA glycosylase (UDG) superfamily. UNG family.</text>
</comment>
<organism>
    <name type="scientific">Porphyromonas gingivalis (strain ATCC 33277 / DSM 20709 / CIP 103683 / JCM 12257 / NCTC 11834 / 2561)</name>
    <dbReference type="NCBI Taxonomy" id="431947"/>
    <lineage>
        <taxon>Bacteria</taxon>
        <taxon>Pseudomonadati</taxon>
        <taxon>Bacteroidota</taxon>
        <taxon>Bacteroidia</taxon>
        <taxon>Bacteroidales</taxon>
        <taxon>Porphyromonadaceae</taxon>
        <taxon>Porphyromonas</taxon>
    </lineage>
</organism>
<protein>
    <recommendedName>
        <fullName evidence="1">Uracil-DNA glycosylase</fullName>
        <shortName evidence="1">UDG</shortName>
        <ecNumber evidence="1">3.2.2.27</ecNumber>
    </recommendedName>
</protein>
<gene>
    <name evidence="1" type="primary">ung</name>
    <name type="ordered locus">PGN_0342</name>
</gene>